<feature type="chain" id="PRO_1000050292" description="4-hydroxy-tetrahydrodipicolinate synthase">
    <location>
        <begin position="1"/>
        <end position="294"/>
    </location>
</feature>
<feature type="active site" description="Proton donor/acceptor" evidence="1">
    <location>
        <position position="132"/>
    </location>
</feature>
<feature type="active site" description="Schiff-base intermediate with substrate" evidence="1">
    <location>
        <position position="161"/>
    </location>
</feature>
<feature type="binding site" evidence="1">
    <location>
        <position position="44"/>
    </location>
    <ligand>
        <name>pyruvate</name>
        <dbReference type="ChEBI" id="CHEBI:15361"/>
    </ligand>
</feature>
<feature type="binding site" evidence="1">
    <location>
        <position position="206"/>
    </location>
    <ligand>
        <name>pyruvate</name>
        <dbReference type="ChEBI" id="CHEBI:15361"/>
    </ligand>
</feature>
<feature type="site" description="Part of a proton relay during catalysis" evidence="1">
    <location>
        <position position="43"/>
    </location>
</feature>
<feature type="site" description="Part of a proton relay during catalysis" evidence="1">
    <location>
        <position position="106"/>
    </location>
</feature>
<protein>
    <recommendedName>
        <fullName evidence="1">4-hydroxy-tetrahydrodipicolinate synthase</fullName>
        <shortName evidence="1">HTPA synthase</shortName>
        <ecNumber evidence="1">4.3.3.7</ecNumber>
    </recommendedName>
</protein>
<organism>
    <name type="scientific">Thermotoga petrophila (strain ATCC BAA-488 / DSM 13995 / JCM 10881 / RKU-1)</name>
    <dbReference type="NCBI Taxonomy" id="390874"/>
    <lineage>
        <taxon>Bacteria</taxon>
        <taxon>Thermotogati</taxon>
        <taxon>Thermotogota</taxon>
        <taxon>Thermotogae</taxon>
        <taxon>Thermotogales</taxon>
        <taxon>Thermotogaceae</taxon>
        <taxon>Thermotoga</taxon>
    </lineage>
</organism>
<reference key="1">
    <citation type="submission" date="2007-05" db="EMBL/GenBank/DDBJ databases">
        <title>Complete sequence of Thermotoga petrophila RKU-1.</title>
        <authorList>
            <consortium name="US DOE Joint Genome Institute"/>
            <person name="Copeland A."/>
            <person name="Lucas S."/>
            <person name="Lapidus A."/>
            <person name="Barry K."/>
            <person name="Glavina del Rio T."/>
            <person name="Dalin E."/>
            <person name="Tice H."/>
            <person name="Pitluck S."/>
            <person name="Sims D."/>
            <person name="Brettin T."/>
            <person name="Bruce D."/>
            <person name="Detter J.C."/>
            <person name="Han C."/>
            <person name="Tapia R."/>
            <person name="Schmutz J."/>
            <person name="Larimer F."/>
            <person name="Land M."/>
            <person name="Hauser L."/>
            <person name="Kyrpides N."/>
            <person name="Mikhailova N."/>
            <person name="Nelson K."/>
            <person name="Gogarten J.P."/>
            <person name="Noll K."/>
            <person name="Richardson P."/>
        </authorList>
    </citation>
    <scope>NUCLEOTIDE SEQUENCE [LARGE SCALE GENOMIC DNA]</scope>
    <source>
        <strain>ATCC BAA-488 / DSM 13995 / JCM 10881 / RKU-1</strain>
    </source>
</reference>
<evidence type="ECO:0000255" key="1">
    <source>
        <dbReference type="HAMAP-Rule" id="MF_00418"/>
    </source>
</evidence>
<evidence type="ECO:0000305" key="2"/>
<sequence length="294" mass="32394">MFRGVGTAIVTPFKNGELDLESYERLVRYQLENGVNALIVLGTTGESPTVNEDEREKLVSRTLEIVDGKIPVIVGAGTNSTEKTLKLVKQAEKLGANGVLVVTPYYNKPTQEGLYQHYKYISERTDLGIVVYNVPGRTGVNVLPETAARIAADLKNVVGIKEANPDIDQIDRTVSLTKQARSDFMVWSGNDDRTFYLLCAGGDGVISVVSNVAPKQMVELCAEYFSGNLEKSREVHRKLRPLMKALFAETNPIPVKAALNLMGFIENELRLPLVPASEKTMELLRNVLKESGLL</sequence>
<name>DAPA_THEP1</name>
<proteinExistence type="inferred from homology"/>
<dbReference type="EC" id="4.3.3.7" evidence="1"/>
<dbReference type="EMBL" id="CP000702">
    <property type="protein sequence ID" value="ABQ47285.1"/>
    <property type="molecule type" value="Genomic_DNA"/>
</dbReference>
<dbReference type="RefSeq" id="WP_011943766.1">
    <property type="nucleotide sequence ID" value="NC_009486.1"/>
</dbReference>
<dbReference type="SMR" id="A5IM62"/>
<dbReference type="STRING" id="390874.Tpet_1271"/>
<dbReference type="KEGG" id="tpt:Tpet_1271"/>
<dbReference type="eggNOG" id="COG0329">
    <property type="taxonomic scope" value="Bacteria"/>
</dbReference>
<dbReference type="HOGENOM" id="CLU_049343_7_0_0"/>
<dbReference type="UniPathway" id="UPA00034">
    <property type="reaction ID" value="UER00017"/>
</dbReference>
<dbReference type="Proteomes" id="UP000006558">
    <property type="component" value="Chromosome"/>
</dbReference>
<dbReference type="GO" id="GO:0005829">
    <property type="term" value="C:cytosol"/>
    <property type="evidence" value="ECO:0007669"/>
    <property type="project" value="TreeGrafter"/>
</dbReference>
<dbReference type="GO" id="GO:0008840">
    <property type="term" value="F:4-hydroxy-tetrahydrodipicolinate synthase activity"/>
    <property type="evidence" value="ECO:0007669"/>
    <property type="project" value="UniProtKB-UniRule"/>
</dbReference>
<dbReference type="GO" id="GO:0019877">
    <property type="term" value="P:diaminopimelate biosynthetic process"/>
    <property type="evidence" value="ECO:0007669"/>
    <property type="project" value="UniProtKB-UniRule"/>
</dbReference>
<dbReference type="GO" id="GO:0009089">
    <property type="term" value="P:lysine biosynthetic process via diaminopimelate"/>
    <property type="evidence" value="ECO:0007669"/>
    <property type="project" value="UniProtKB-UniRule"/>
</dbReference>
<dbReference type="CDD" id="cd00950">
    <property type="entry name" value="DHDPS"/>
    <property type="match status" value="1"/>
</dbReference>
<dbReference type="Gene3D" id="3.20.20.70">
    <property type="entry name" value="Aldolase class I"/>
    <property type="match status" value="1"/>
</dbReference>
<dbReference type="HAMAP" id="MF_00418">
    <property type="entry name" value="DapA"/>
    <property type="match status" value="1"/>
</dbReference>
<dbReference type="InterPro" id="IPR013785">
    <property type="entry name" value="Aldolase_TIM"/>
</dbReference>
<dbReference type="InterPro" id="IPR005263">
    <property type="entry name" value="DapA"/>
</dbReference>
<dbReference type="InterPro" id="IPR002220">
    <property type="entry name" value="DapA-like"/>
</dbReference>
<dbReference type="InterPro" id="IPR020625">
    <property type="entry name" value="Schiff_base-form_aldolases_AS"/>
</dbReference>
<dbReference type="InterPro" id="IPR020624">
    <property type="entry name" value="Schiff_base-form_aldolases_CS"/>
</dbReference>
<dbReference type="NCBIfam" id="TIGR00674">
    <property type="entry name" value="dapA"/>
    <property type="match status" value="1"/>
</dbReference>
<dbReference type="PANTHER" id="PTHR12128:SF66">
    <property type="entry name" value="4-HYDROXY-2-OXOGLUTARATE ALDOLASE, MITOCHONDRIAL"/>
    <property type="match status" value="1"/>
</dbReference>
<dbReference type="PANTHER" id="PTHR12128">
    <property type="entry name" value="DIHYDRODIPICOLINATE SYNTHASE"/>
    <property type="match status" value="1"/>
</dbReference>
<dbReference type="Pfam" id="PF00701">
    <property type="entry name" value="DHDPS"/>
    <property type="match status" value="1"/>
</dbReference>
<dbReference type="PIRSF" id="PIRSF001365">
    <property type="entry name" value="DHDPS"/>
    <property type="match status" value="1"/>
</dbReference>
<dbReference type="PRINTS" id="PR00146">
    <property type="entry name" value="DHPICSNTHASE"/>
</dbReference>
<dbReference type="SMART" id="SM01130">
    <property type="entry name" value="DHDPS"/>
    <property type="match status" value="1"/>
</dbReference>
<dbReference type="SUPFAM" id="SSF51569">
    <property type="entry name" value="Aldolase"/>
    <property type="match status" value="1"/>
</dbReference>
<dbReference type="PROSITE" id="PS00665">
    <property type="entry name" value="DHDPS_1"/>
    <property type="match status" value="1"/>
</dbReference>
<dbReference type="PROSITE" id="PS00666">
    <property type="entry name" value="DHDPS_2"/>
    <property type="match status" value="1"/>
</dbReference>
<keyword id="KW-0028">Amino-acid biosynthesis</keyword>
<keyword id="KW-0963">Cytoplasm</keyword>
<keyword id="KW-0220">Diaminopimelate biosynthesis</keyword>
<keyword id="KW-0456">Lyase</keyword>
<keyword id="KW-0457">Lysine biosynthesis</keyword>
<keyword id="KW-0704">Schiff base</keyword>
<accession>A5IM62</accession>
<comment type="function">
    <text evidence="1">Catalyzes the condensation of (S)-aspartate-beta-semialdehyde [(S)-ASA] and pyruvate to 4-hydroxy-tetrahydrodipicolinate (HTPA).</text>
</comment>
<comment type="catalytic activity">
    <reaction evidence="1">
        <text>L-aspartate 4-semialdehyde + pyruvate = (2S,4S)-4-hydroxy-2,3,4,5-tetrahydrodipicolinate + H2O + H(+)</text>
        <dbReference type="Rhea" id="RHEA:34171"/>
        <dbReference type="ChEBI" id="CHEBI:15361"/>
        <dbReference type="ChEBI" id="CHEBI:15377"/>
        <dbReference type="ChEBI" id="CHEBI:15378"/>
        <dbReference type="ChEBI" id="CHEBI:67139"/>
        <dbReference type="ChEBI" id="CHEBI:537519"/>
        <dbReference type="EC" id="4.3.3.7"/>
    </reaction>
</comment>
<comment type="pathway">
    <text evidence="1">Amino-acid biosynthesis; L-lysine biosynthesis via DAP pathway; (S)-tetrahydrodipicolinate from L-aspartate: step 3/4.</text>
</comment>
<comment type="subunit">
    <text evidence="1">Homotetramer; dimer of dimers.</text>
</comment>
<comment type="subcellular location">
    <subcellularLocation>
        <location evidence="1">Cytoplasm</location>
    </subcellularLocation>
</comment>
<comment type="similarity">
    <text evidence="1">Belongs to the DapA family.</text>
</comment>
<comment type="caution">
    <text evidence="2">Was originally thought to be a dihydrodipicolinate synthase (DHDPS), catalyzing the condensation of (S)-aspartate-beta-semialdehyde [(S)-ASA] and pyruvate to dihydrodipicolinate (DHDP). However, it was shown in E.coli that the product of the enzymatic reaction is not dihydrodipicolinate but in fact (4S)-4-hydroxy-2,3,4,5-tetrahydro-(2S)-dipicolinic acid (HTPA), and that the consecutive dehydration reaction leading to DHDP is not spontaneous but catalyzed by DapB.</text>
</comment>
<gene>
    <name evidence="1" type="primary">dapA</name>
    <name type="ordered locus">Tpet_1271</name>
</gene>